<organism>
    <name type="scientific">Desulforamulus reducens (strain ATCC BAA-1160 / DSM 100696 / MI-1)</name>
    <name type="common">Desulfotomaculum reducens</name>
    <dbReference type="NCBI Taxonomy" id="349161"/>
    <lineage>
        <taxon>Bacteria</taxon>
        <taxon>Bacillati</taxon>
        <taxon>Bacillota</taxon>
        <taxon>Clostridia</taxon>
        <taxon>Eubacteriales</taxon>
        <taxon>Peptococcaceae</taxon>
        <taxon>Desulforamulus</taxon>
    </lineage>
</organism>
<dbReference type="EMBL" id="CP000612">
    <property type="protein sequence ID" value="ABO50448.1"/>
    <property type="molecule type" value="Genomic_DNA"/>
</dbReference>
<dbReference type="RefSeq" id="WP_011878259.1">
    <property type="nucleotide sequence ID" value="NC_009253.1"/>
</dbReference>
<dbReference type="SMR" id="A4J5U5"/>
<dbReference type="STRING" id="349161.Dred_1927"/>
<dbReference type="KEGG" id="drm:Dred_1927"/>
<dbReference type="eggNOG" id="COG1666">
    <property type="taxonomic scope" value="Bacteria"/>
</dbReference>
<dbReference type="HOGENOM" id="CLU_099839_1_0_9"/>
<dbReference type="OrthoDB" id="9801447at2"/>
<dbReference type="Proteomes" id="UP000001556">
    <property type="component" value="Chromosome"/>
</dbReference>
<dbReference type="GO" id="GO:0005829">
    <property type="term" value="C:cytosol"/>
    <property type="evidence" value="ECO:0007669"/>
    <property type="project" value="TreeGrafter"/>
</dbReference>
<dbReference type="GO" id="GO:0000166">
    <property type="term" value="F:nucleotide binding"/>
    <property type="evidence" value="ECO:0007669"/>
    <property type="project" value="TreeGrafter"/>
</dbReference>
<dbReference type="CDD" id="cd11740">
    <property type="entry name" value="YajQ_like"/>
    <property type="match status" value="1"/>
</dbReference>
<dbReference type="Gene3D" id="3.30.70.860">
    <property type="match status" value="1"/>
</dbReference>
<dbReference type="Gene3D" id="3.30.70.990">
    <property type="entry name" value="YajQ-like, domain 2"/>
    <property type="match status" value="1"/>
</dbReference>
<dbReference type="HAMAP" id="MF_00632">
    <property type="entry name" value="YajQ"/>
    <property type="match status" value="1"/>
</dbReference>
<dbReference type="InterPro" id="IPR007551">
    <property type="entry name" value="DUF520"/>
</dbReference>
<dbReference type="InterPro" id="IPR035571">
    <property type="entry name" value="UPF0234-like_C"/>
</dbReference>
<dbReference type="InterPro" id="IPR035570">
    <property type="entry name" value="UPF0234_N"/>
</dbReference>
<dbReference type="InterPro" id="IPR036183">
    <property type="entry name" value="YajQ-like_sf"/>
</dbReference>
<dbReference type="NCBIfam" id="NF003819">
    <property type="entry name" value="PRK05412.1"/>
    <property type="match status" value="1"/>
</dbReference>
<dbReference type="PANTHER" id="PTHR30476">
    <property type="entry name" value="UPF0234 PROTEIN YAJQ"/>
    <property type="match status" value="1"/>
</dbReference>
<dbReference type="PANTHER" id="PTHR30476:SF0">
    <property type="entry name" value="UPF0234 PROTEIN YAJQ"/>
    <property type="match status" value="1"/>
</dbReference>
<dbReference type="Pfam" id="PF04461">
    <property type="entry name" value="DUF520"/>
    <property type="match status" value="1"/>
</dbReference>
<dbReference type="SUPFAM" id="SSF89963">
    <property type="entry name" value="YajQ-like"/>
    <property type="match status" value="2"/>
</dbReference>
<reference key="1">
    <citation type="submission" date="2007-03" db="EMBL/GenBank/DDBJ databases">
        <title>Complete sequence of Desulfotomaculum reducens MI-1.</title>
        <authorList>
            <consortium name="US DOE Joint Genome Institute"/>
            <person name="Copeland A."/>
            <person name="Lucas S."/>
            <person name="Lapidus A."/>
            <person name="Barry K."/>
            <person name="Detter J.C."/>
            <person name="Glavina del Rio T."/>
            <person name="Hammon N."/>
            <person name="Israni S."/>
            <person name="Dalin E."/>
            <person name="Tice H."/>
            <person name="Pitluck S."/>
            <person name="Sims D."/>
            <person name="Brettin T."/>
            <person name="Bruce D."/>
            <person name="Han C."/>
            <person name="Tapia R."/>
            <person name="Schmutz J."/>
            <person name="Larimer F."/>
            <person name="Land M."/>
            <person name="Hauser L."/>
            <person name="Kyrpides N."/>
            <person name="Kim E."/>
            <person name="Tebo B.M."/>
            <person name="Richardson P."/>
        </authorList>
    </citation>
    <scope>NUCLEOTIDE SEQUENCE [LARGE SCALE GENOMIC DNA]</scope>
    <source>
        <strain>ATCC BAA-1160 / DSM 100696 / MI-1</strain>
    </source>
</reference>
<gene>
    <name type="ordered locus">Dred_1927</name>
</gene>
<feature type="chain" id="PRO_1000082625" description="Nucleotide-binding protein Dred_1927">
    <location>
        <begin position="1"/>
        <end position="166"/>
    </location>
</feature>
<keyword id="KW-0547">Nucleotide-binding</keyword>
<keyword id="KW-1185">Reference proteome</keyword>
<sequence>MAKENSFDIVSRVDMQEVLNAVNQALREIETRFDFRGSKSRIIFENKPEITLISDDDFKLRNVIDILESKLIKRGINLKALRYGKVESAAGDTVRQVVTLVQGIEQDIAKKIVKAIKDSKVKVQASVQGDQVRVSGKNRDDLQLAINVVKGTELDIPVEFTNYRTI</sequence>
<proteinExistence type="inferred from homology"/>
<evidence type="ECO:0000255" key="1">
    <source>
        <dbReference type="HAMAP-Rule" id="MF_00632"/>
    </source>
</evidence>
<protein>
    <recommendedName>
        <fullName evidence="1">Nucleotide-binding protein Dred_1927</fullName>
    </recommendedName>
</protein>
<name>Y1927_DESRM</name>
<accession>A4J5U5</accession>
<comment type="function">
    <text evidence="1">Nucleotide-binding protein.</text>
</comment>
<comment type="similarity">
    <text evidence="1">Belongs to the YajQ family.</text>
</comment>